<keyword id="KW-0028">Amino-acid biosynthesis</keyword>
<keyword id="KW-0057">Aromatic amino acid biosynthesis</keyword>
<keyword id="KW-0963">Cytoplasm</keyword>
<keyword id="KW-1185">Reference proteome</keyword>
<keyword id="KW-0808">Transferase</keyword>
<dbReference type="EC" id="2.5.1.19" evidence="1"/>
<dbReference type="EMBL" id="AL646052">
    <property type="protein sequence ID" value="CAD14609.1"/>
    <property type="molecule type" value="Genomic_DNA"/>
</dbReference>
<dbReference type="RefSeq" id="WP_011000859.1">
    <property type="nucleotide sequence ID" value="NC_003295.1"/>
</dbReference>
<dbReference type="SMR" id="Q8Y0Y6"/>
<dbReference type="STRING" id="267608.RSc0907"/>
<dbReference type="EnsemblBacteria" id="CAD14609">
    <property type="protein sequence ID" value="CAD14609"/>
    <property type="gene ID" value="RSc0907"/>
</dbReference>
<dbReference type="KEGG" id="rso:RSc0907"/>
<dbReference type="PATRIC" id="fig|267608.8.peg.929"/>
<dbReference type="eggNOG" id="COG0128">
    <property type="taxonomic scope" value="Bacteria"/>
</dbReference>
<dbReference type="HOGENOM" id="CLU_024321_0_0_4"/>
<dbReference type="UniPathway" id="UPA00053">
    <property type="reaction ID" value="UER00089"/>
</dbReference>
<dbReference type="Proteomes" id="UP000001436">
    <property type="component" value="Chromosome"/>
</dbReference>
<dbReference type="GO" id="GO:0005737">
    <property type="term" value="C:cytoplasm"/>
    <property type="evidence" value="ECO:0007669"/>
    <property type="project" value="UniProtKB-SubCell"/>
</dbReference>
<dbReference type="GO" id="GO:0003866">
    <property type="term" value="F:3-phosphoshikimate 1-carboxyvinyltransferase activity"/>
    <property type="evidence" value="ECO:0007669"/>
    <property type="project" value="UniProtKB-UniRule"/>
</dbReference>
<dbReference type="GO" id="GO:0008652">
    <property type="term" value="P:amino acid biosynthetic process"/>
    <property type="evidence" value="ECO:0007669"/>
    <property type="project" value="UniProtKB-KW"/>
</dbReference>
<dbReference type="GO" id="GO:0009073">
    <property type="term" value="P:aromatic amino acid family biosynthetic process"/>
    <property type="evidence" value="ECO:0007669"/>
    <property type="project" value="UniProtKB-KW"/>
</dbReference>
<dbReference type="GO" id="GO:0009423">
    <property type="term" value="P:chorismate biosynthetic process"/>
    <property type="evidence" value="ECO:0007669"/>
    <property type="project" value="UniProtKB-UniRule"/>
</dbReference>
<dbReference type="CDD" id="cd01556">
    <property type="entry name" value="EPSP_synthase"/>
    <property type="match status" value="1"/>
</dbReference>
<dbReference type="FunFam" id="3.65.10.10:FF:000003">
    <property type="entry name" value="3-phosphoshikimate 1-carboxyvinyltransferase"/>
    <property type="match status" value="1"/>
</dbReference>
<dbReference type="FunFam" id="3.65.10.10:FF:000004">
    <property type="entry name" value="3-phosphoshikimate 1-carboxyvinyltransferase"/>
    <property type="match status" value="1"/>
</dbReference>
<dbReference type="Gene3D" id="3.65.10.10">
    <property type="entry name" value="Enolpyruvate transferase domain"/>
    <property type="match status" value="2"/>
</dbReference>
<dbReference type="HAMAP" id="MF_00210">
    <property type="entry name" value="EPSP_synth"/>
    <property type="match status" value="1"/>
</dbReference>
<dbReference type="InterPro" id="IPR001986">
    <property type="entry name" value="Enolpyruvate_Tfrase_dom"/>
</dbReference>
<dbReference type="InterPro" id="IPR036968">
    <property type="entry name" value="Enolpyruvate_Tfrase_sf"/>
</dbReference>
<dbReference type="InterPro" id="IPR006264">
    <property type="entry name" value="EPSP_synthase"/>
</dbReference>
<dbReference type="InterPro" id="IPR023193">
    <property type="entry name" value="EPSP_synthase_CS"/>
</dbReference>
<dbReference type="InterPro" id="IPR013792">
    <property type="entry name" value="RNA3'P_cycl/enolpyr_Trfase_a/b"/>
</dbReference>
<dbReference type="NCBIfam" id="TIGR01356">
    <property type="entry name" value="aroA"/>
    <property type="match status" value="1"/>
</dbReference>
<dbReference type="PANTHER" id="PTHR21090">
    <property type="entry name" value="AROM/DEHYDROQUINATE SYNTHASE"/>
    <property type="match status" value="1"/>
</dbReference>
<dbReference type="PANTHER" id="PTHR21090:SF5">
    <property type="entry name" value="PENTAFUNCTIONAL AROM POLYPEPTIDE"/>
    <property type="match status" value="1"/>
</dbReference>
<dbReference type="Pfam" id="PF00275">
    <property type="entry name" value="EPSP_synthase"/>
    <property type="match status" value="1"/>
</dbReference>
<dbReference type="PIRSF" id="PIRSF000505">
    <property type="entry name" value="EPSPS"/>
    <property type="match status" value="1"/>
</dbReference>
<dbReference type="SUPFAM" id="SSF55205">
    <property type="entry name" value="EPT/RTPC-like"/>
    <property type="match status" value="1"/>
</dbReference>
<dbReference type="PROSITE" id="PS00104">
    <property type="entry name" value="EPSP_SYNTHASE_1"/>
    <property type="match status" value="1"/>
</dbReference>
<dbReference type="PROSITE" id="PS00885">
    <property type="entry name" value="EPSP_SYNTHASE_2"/>
    <property type="match status" value="1"/>
</dbReference>
<name>AROA_RALN1</name>
<proteinExistence type="inferred from homology"/>
<reference key="1">
    <citation type="journal article" date="2002" name="Nature">
        <title>Genome sequence of the plant pathogen Ralstonia solanacearum.</title>
        <authorList>
            <person name="Salanoubat M."/>
            <person name="Genin S."/>
            <person name="Artiguenave F."/>
            <person name="Gouzy J."/>
            <person name="Mangenot S."/>
            <person name="Arlat M."/>
            <person name="Billault A."/>
            <person name="Brottier P."/>
            <person name="Camus J.-C."/>
            <person name="Cattolico L."/>
            <person name="Chandler M."/>
            <person name="Choisne N."/>
            <person name="Claudel-Renard C."/>
            <person name="Cunnac S."/>
            <person name="Demange N."/>
            <person name="Gaspin C."/>
            <person name="Lavie M."/>
            <person name="Moisan A."/>
            <person name="Robert C."/>
            <person name="Saurin W."/>
            <person name="Schiex T."/>
            <person name="Siguier P."/>
            <person name="Thebault P."/>
            <person name="Whalen M."/>
            <person name="Wincker P."/>
            <person name="Levy M."/>
            <person name="Weissenbach J."/>
            <person name="Boucher C.A."/>
        </authorList>
    </citation>
    <scope>NUCLEOTIDE SEQUENCE [LARGE SCALE GENOMIC DNA]</scope>
    <source>
        <strain>ATCC BAA-1114 / GMI1000</strain>
    </source>
</reference>
<sequence length="436" mass="46145">MEHLDVGPLKAARGTVKLPGSKSISNRVLLLAALAEGETVVRDLLDSDDTRVMLAALDTLGVRCEPLGTANAYRVTGTGGRFPAKSADLFMGNAGTAIRPLTAALALQGGEYTLHGVPRMHERPIGDLVDGLRQVGARIDYTGNEGFPPLAIRAASIRIDAPIRVRGDVSSQFLTALLMALPLVEGSGRPVTIEVVGELISKPYIEITLNLMARFGVQVERNGWASFSVPTGVAYRAPGEIFVEGDASSASYFLAAGALGGGPVRVEGVGMSSIQGDVRFADALNRMGANVMAGDNWIEVRGVERDDGKLHALELDCNHIPDAAMTLAVAALFADGTTTLTNIGSWRVKETDRLTAMATELRKLGAAVEEGTDYIRVTPPSHWTAPAGGIDTYDDHRMAMAFSLAAFGPVPVRINDPRCVAKTFPEYFTAFGGIAA</sequence>
<accession>Q8Y0Y6</accession>
<comment type="function">
    <text evidence="1">Catalyzes the transfer of the enolpyruvyl moiety of phosphoenolpyruvate (PEP) to the 5-hydroxyl of shikimate-3-phosphate (S3P) to produce enolpyruvyl shikimate-3-phosphate and inorganic phosphate.</text>
</comment>
<comment type="catalytic activity">
    <reaction evidence="1">
        <text>3-phosphoshikimate + phosphoenolpyruvate = 5-O-(1-carboxyvinyl)-3-phosphoshikimate + phosphate</text>
        <dbReference type="Rhea" id="RHEA:21256"/>
        <dbReference type="ChEBI" id="CHEBI:43474"/>
        <dbReference type="ChEBI" id="CHEBI:57701"/>
        <dbReference type="ChEBI" id="CHEBI:58702"/>
        <dbReference type="ChEBI" id="CHEBI:145989"/>
        <dbReference type="EC" id="2.5.1.19"/>
    </reaction>
    <physiologicalReaction direction="left-to-right" evidence="1">
        <dbReference type="Rhea" id="RHEA:21257"/>
    </physiologicalReaction>
</comment>
<comment type="pathway">
    <text evidence="1">Metabolic intermediate biosynthesis; chorismate biosynthesis; chorismate from D-erythrose 4-phosphate and phosphoenolpyruvate: step 6/7.</text>
</comment>
<comment type="subunit">
    <text evidence="1">Monomer.</text>
</comment>
<comment type="subcellular location">
    <subcellularLocation>
        <location evidence="1">Cytoplasm</location>
    </subcellularLocation>
</comment>
<comment type="similarity">
    <text evidence="1">Belongs to the EPSP synthase family.</text>
</comment>
<evidence type="ECO:0000255" key="1">
    <source>
        <dbReference type="HAMAP-Rule" id="MF_00210"/>
    </source>
</evidence>
<gene>
    <name evidence="1" type="primary">aroA</name>
    <name type="ordered locus">RSc0907</name>
    <name type="ORF">RS04508</name>
</gene>
<organism>
    <name type="scientific">Ralstonia nicotianae (strain ATCC BAA-1114 / GMI1000)</name>
    <name type="common">Ralstonia solanacearum</name>
    <dbReference type="NCBI Taxonomy" id="267608"/>
    <lineage>
        <taxon>Bacteria</taxon>
        <taxon>Pseudomonadati</taxon>
        <taxon>Pseudomonadota</taxon>
        <taxon>Betaproteobacteria</taxon>
        <taxon>Burkholderiales</taxon>
        <taxon>Burkholderiaceae</taxon>
        <taxon>Ralstonia</taxon>
        <taxon>Ralstonia solanacearum species complex</taxon>
    </lineage>
</organism>
<protein>
    <recommendedName>
        <fullName evidence="1">3-phosphoshikimate 1-carboxyvinyltransferase</fullName>
        <ecNumber evidence="1">2.5.1.19</ecNumber>
    </recommendedName>
    <alternativeName>
        <fullName evidence="1">5-enolpyruvylshikimate-3-phosphate synthase</fullName>
        <shortName evidence="1">EPSP synthase</shortName>
        <shortName evidence="1">EPSPS</shortName>
    </alternativeName>
</protein>
<feature type="chain" id="PRO_0000088281" description="3-phosphoshikimate 1-carboxyvinyltransferase">
    <location>
        <begin position="1"/>
        <end position="436"/>
    </location>
</feature>
<feature type="active site" description="Proton acceptor" evidence="1">
    <location>
        <position position="322"/>
    </location>
</feature>
<feature type="binding site" evidence="1">
    <location>
        <position position="22"/>
    </location>
    <ligand>
        <name>3-phosphoshikimate</name>
        <dbReference type="ChEBI" id="CHEBI:145989"/>
    </ligand>
</feature>
<feature type="binding site" evidence="1">
    <location>
        <position position="22"/>
    </location>
    <ligand>
        <name>phosphoenolpyruvate</name>
        <dbReference type="ChEBI" id="CHEBI:58702"/>
    </ligand>
</feature>
<feature type="binding site" evidence="1">
    <location>
        <position position="23"/>
    </location>
    <ligand>
        <name>3-phosphoshikimate</name>
        <dbReference type="ChEBI" id="CHEBI:145989"/>
    </ligand>
</feature>
<feature type="binding site" evidence="1">
    <location>
        <position position="27"/>
    </location>
    <ligand>
        <name>3-phosphoshikimate</name>
        <dbReference type="ChEBI" id="CHEBI:145989"/>
    </ligand>
</feature>
<feature type="binding site" evidence="1">
    <location>
        <position position="95"/>
    </location>
    <ligand>
        <name>phosphoenolpyruvate</name>
        <dbReference type="ChEBI" id="CHEBI:58702"/>
    </ligand>
</feature>
<feature type="binding site" evidence="1">
    <location>
        <position position="123"/>
    </location>
    <ligand>
        <name>phosphoenolpyruvate</name>
        <dbReference type="ChEBI" id="CHEBI:58702"/>
    </ligand>
</feature>
<feature type="binding site" evidence="1">
    <location>
        <position position="170"/>
    </location>
    <ligand>
        <name>3-phosphoshikimate</name>
        <dbReference type="ChEBI" id="CHEBI:145989"/>
    </ligand>
</feature>
<feature type="binding site" evidence="1">
    <location>
        <position position="171"/>
    </location>
    <ligand>
        <name>3-phosphoshikimate</name>
        <dbReference type="ChEBI" id="CHEBI:145989"/>
    </ligand>
</feature>
<feature type="binding site" evidence="1">
    <location>
        <position position="172"/>
    </location>
    <ligand>
        <name>3-phosphoshikimate</name>
        <dbReference type="ChEBI" id="CHEBI:145989"/>
    </ligand>
</feature>
<feature type="binding site" evidence="1">
    <location>
        <position position="172"/>
    </location>
    <ligand>
        <name>phosphoenolpyruvate</name>
        <dbReference type="ChEBI" id="CHEBI:58702"/>
    </ligand>
</feature>
<feature type="binding site" evidence="1">
    <location>
        <position position="201"/>
    </location>
    <ligand>
        <name>3-phosphoshikimate</name>
        <dbReference type="ChEBI" id="CHEBI:145989"/>
    </ligand>
</feature>
<feature type="binding site" evidence="1">
    <location>
        <position position="322"/>
    </location>
    <ligand>
        <name>3-phosphoshikimate</name>
        <dbReference type="ChEBI" id="CHEBI:145989"/>
    </ligand>
</feature>
<feature type="binding site" evidence="1">
    <location>
        <position position="349"/>
    </location>
    <ligand>
        <name>3-phosphoshikimate</name>
        <dbReference type="ChEBI" id="CHEBI:145989"/>
    </ligand>
</feature>
<feature type="binding site" evidence="1">
    <location>
        <position position="353"/>
    </location>
    <ligand>
        <name>phosphoenolpyruvate</name>
        <dbReference type="ChEBI" id="CHEBI:58702"/>
    </ligand>
</feature>
<feature type="binding site" evidence="1">
    <location>
        <position position="397"/>
    </location>
    <ligand>
        <name>phosphoenolpyruvate</name>
        <dbReference type="ChEBI" id="CHEBI:58702"/>
    </ligand>
</feature>
<feature type="binding site" evidence="1">
    <location>
        <position position="422"/>
    </location>
    <ligand>
        <name>phosphoenolpyruvate</name>
        <dbReference type="ChEBI" id="CHEBI:58702"/>
    </ligand>
</feature>